<gene>
    <name evidence="1" type="primary">nikE</name>
    <name type="ordered locus">BRA0800</name>
    <name type="ordered locus">BS1330_II0793</name>
</gene>
<evidence type="ECO:0000255" key="1">
    <source>
        <dbReference type="HAMAP-Rule" id="MF_01712"/>
    </source>
</evidence>
<evidence type="ECO:0000269" key="2">
    <source>
    </source>
</evidence>
<evidence type="ECO:0000305" key="3"/>
<reference key="1">
    <citation type="journal article" date="2001" name="J. Bacteriol.">
        <title>Identification of the nik gene cluster of Brucella suis: regulation and contribution to urease activity.</title>
        <authorList>
            <person name="Jubier-Maurin V."/>
            <person name="Rodrigue A."/>
            <person name="Ouahrani-Bettache S."/>
            <person name="Layssac M."/>
            <person name="Mandrand-Berthelot M.-A."/>
            <person name="Koehler S."/>
            <person name="Liautard J.-P."/>
        </authorList>
    </citation>
    <scope>NUCLEOTIDE SEQUENCE [GENOMIC DNA]</scope>
    <scope>INDUCTION</scope>
    <source>
        <strain>1330</strain>
    </source>
</reference>
<reference key="2">
    <citation type="journal article" date="2002" name="Proc. Natl. Acad. Sci. U.S.A.">
        <title>The Brucella suis genome reveals fundamental similarities between animal and plant pathogens and symbionts.</title>
        <authorList>
            <person name="Paulsen I.T."/>
            <person name="Seshadri R."/>
            <person name="Nelson K.E."/>
            <person name="Eisen J.A."/>
            <person name="Heidelberg J.F."/>
            <person name="Read T.D."/>
            <person name="Dodson R.J."/>
            <person name="Umayam L.A."/>
            <person name="Brinkac L.M."/>
            <person name="Beanan M.J."/>
            <person name="Daugherty S.C."/>
            <person name="DeBoy R.T."/>
            <person name="Durkin A.S."/>
            <person name="Kolonay J.F."/>
            <person name="Madupu R."/>
            <person name="Nelson W.C."/>
            <person name="Ayodeji B."/>
            <person name="Kraul M."/>
            <person name="Shetty J."/>
            <person name="Malek J.A."/>
            <person name="Van Aken S.E."/>
            <person name="Riedmuller S."/>
            <person name="Tettelin H."/>
            <person name="Gill S.R."/>
            <person name="White O."/>
            <person name="Salzberg S.L."/>
            <person name="Hoover D.L."/>
            <person name="Lindler L.E."/>
            <person name="Halling S.M."/>
            <person name="Boyle S.M."/>
            <person name="Fraser C.M."/>
        </authorList>
    </citation>
    <scope>NUCLEOTIDE SEQUENCE [LARGE SCALE GENOMIC DNA]</scope>
    <source>
        <strain>1330</strain>
    </source>
</reference>
<reference key="3">
    <citation type="journal article" date="2011" name="J. Bacteriol.">
        <title>Revised genome sequence of Brucella suis 1330.</title>
        <authorList>
            <person name="Tae H."/>
            <person name="Shallom S."/>
            <person name="Settlage R."/>
            <person name="Preston D."/>
            <person name="Adams L.G."/>
            <person name="Garner H.R."/>
        </authorList>
    </citation>
    <scope>NUCLEOTIDE SEQUENCE [LARGE SCALE GENOMIC DNA]</scope>
    <source>
        <strain>1330</strain>
    </source>
</reference>
<name>NIKE_BRUSU</name>
<accession>Q8FVN0</accession>
<accession>G0KDG6</accession>
<accession>Q9AL78</accession>
<protein>
    <recommendedName>
        <fullName evidence="1">Nickel import ATP-binding protein NikE</fullName>
        <ecNumber evidence="1">7.2.2.11</ecNumber>
    </recommendedName>
</protein>
<feature type="chain" id="PRO_0000092626" description="Nickel import ATP-binding protein NikE">
    <location>
        <begin position="1"/>
        <end position="266"/>
    </location>
</feature>
<feature type="domain" description="ABC transporter" evidence="1">
    <location>
        <begin position="4"/>
        <end position="252"/>
    </location>
</feature>
<feature type="binding site" evidence="1">
    <location>
        <begin position="45"/>
        <end position="52"/>
    </location>
    <ligand>
        <name>ATP</name>
        <dbReference type="ChEBI" id="CHEBI:30616"/>
    </ligand>
</feature>
<feature type="sequence conflict" description="In Ref. 1; CAC24697." evidence="3" ref="1">
    <original>S</original>
    <variation>F</variation>
    <location>
        <position position="121"/>
    </location>
</feature>
<sequence length="266" mass="29148">MSLISADNIVKIYQSHSLVGASARKTVLHDISISIGQGETVALLGRSGCGKSTLARLLVGLERPTSGEVRFRGVPLTKLDRSGMKAFRREVQLIFQDSPGAVNARSSVRAIIGEPLRHLTSLDETRREERIQELLRLVELPPEIADRLPAQVSGGQLQRICIARALAVNPKLIILDEAVSNLDIHLQASALALLTKLQQEGGIAYLFVTHDLRLVQKFAARCLVMDEGQIVEEIKTADLDSMRHPASRLLREAVLPPLPVRAVETN</sequence>
<dbReference type="EC" id="7.2.2.11" evidence="1"/>
<dbReference type="EMBL" id="AJ278644">
    <property type="protein sequence ID" value="CAC24697.1"/>
    <property type="molecule type" value="Genomic_DNA"/>
</dbReference>
<dbReference type="EMBL" id="AE014292">
    <property type="protein sequence ID" value="AAN33978.1"/>
    <property type="molecule type" value="Genomic_DNA"/>
</dbReference>
<dbReference type="EMBL" id="CP002998">
    <property type="protein sequence ID" value="AEM20254.1"/>
    <property type="molecule type" value="Genomic_DNA"/>
</dbReference>
<dbReference type="RefSeq" id="WP_004687156.1">
    <property type="nucleotide sequence ID" value="NZ_KN046805.1"/>
</dbReference>
<dbReference type="SMR" id="Q8FVN0"/>
<dbReference type="GeneID" id="97535848"/>
<dbReference type="KEGG" id="bms:BRA0800"/>
<dbReference type="KEGG" id="bsi:BS1330_II0793"/>
<dbReference type="PATRIC" id="fig|204722.21.peg.3645"/>
<dbReference type="HOGENOM" id="CLU_000604_1_23_5"/>
<dbReference type="PhylomeDB" id="Q8FVN0"/>
<dbReference type="Proteomes" id="UP000007104">
    <property type="component" value="Chromosome II"/>
</dbReference>
<dbReference type="GO" id="GO:0005886">
    <property type="term" value="C:plasma membrane"/>
    <property type="evidence" value="ECO:0007669"/>
    <property type="project" value="UniProtKB-SubCell"/>
</dbReference>
<dbReference type="GO" id="GO:0015413">
    <property type="term" value="F:ABC-type nickel transporter activity"/>
    <property type="evidence" value="ECO:0007669"/>
    <property type="project" value="UniProtKB-EC"/>
</dbReference>
<dbReference type="GO" id="GO:0005524">
    <property type="term" value="F:ATP binding"/>
    <property type="evidence" value="ECO:0007669"/>
    <property type="project" value="UniProtKB-KW"/>
</dbReference>
<dbReference type="GO" id="GO:0016887">
    <property type="term" value="F:ATP hydrolysis activity"/>
    <property type="evidence" value="ECO:0007669"/>
    <property type="project" value="InterPro"/>
</dbReference>
<dbReference type="GO" id="GO:0016151">
    <property type="term" value="F:nickel cation binding"/>
    <property type="evidence" value="ECO:0007669"/>
    <property type="project" value="InterPro"/>
</dbReference>
<dbReference type="CDD" id="cd03257">
    <property type="entry name" value="ABC_NikE_OppD_transporters"/>
    <property type="match status" value="1"/>
</dbReference>
<dbReference type="Gene3D" id="3.40.50.300">
    <property type="entry name" value="P-loop containing nucleotide triphosphate hydrolases"/>
    <property type="match status" value="1"/>
</dbReference>
<dbReference type="InterPro" id="IPR003593">
    <property type="entry name" value="AAA+_ATPase"/>
</dbReference>
<dbReference type="InterPro" id="IPR050319">
    <property type="entry name" value="ABC_transp_ATP-bind"/>
</dbReference>
<dbReference type="InterPro" id="IPR003439">
    <property type="entry name" value="ABC_transporter-like_ATP-bd"/>
</dbReference>
<dbReference type="InterPro" id="IPR017871">
    <property type="entry name" value="ABC_transporter-like_CS"/>
</dbReference>
<dbReference type="InterPro" id="IPR014137">
    <property type="entry name" value="Nickel_NikE"/>
</dbReference>
<dbReference type="InterPro" id="IPR027417">
    <property type="entry name" value="P-loop_NTPase"/>
</dbReference>
<dbReference type="NCBIfam" id="TIGR02769">
    <property type="entry name" value="nickel_nikE"/>
    <property type="match status" value="1"/>
</dbReference>
<dbReference type="NCBIfam" id="NF007739">
    <property type="entry name" value="PRK10419.1"/>
    <property type="match status" value="1"/>
</dbReference>
<dbReference type="PANTHER" id="PTHR43776:SF7">
    <property type="entry name" value="D,D-DIPEPTIDE TRANSPORT ATP-BINDING PROTEIN DDPF-RELATED"/>
    <property type="match status" value="1"/>
</dbReference>
<dbReference type="PANTHER" id="PTHR43776">
    <property type="entry name" value="TRANSPORT ATP-BINDING PROTEIN"/>
    <property type="match status" value="1"/>
</dbReference>
<dbReference type="Pfam" id="PF00005">
    <property type="entry name" value="ABC_tran"/>
    <property type="match status" value="1"/>
</dbReference>
<dbReference type="SMART" id="SM00382">
    <property type="entry name" value="AAA"/>
    <property type="match status" value="1"/>
</dbReference>
<dbReference type="SUPFAM" id="SSF52540">
    <property type="entry name" value="P-loop containing nucleoside triphosphate hydrolases"/>
    <property type="match status" value="1"/>
</dbReference>
<dbReference type="PROSITE" id="PS00211">
    <property type="entry name" value="ABC_TRANSPORTER_1"/>
    <property type="match status" value="1"/>
</dbReference>
<dbReference type="PROSITE" id="PS50893">
    <property type="entry name" value="ABC_TRANSPORTER_2"/>
    <property type="match status" value="1"/>
</dbReference>
<dbReference type="PROSITE" id="PS51248">
    <property type="entry name" value="NIKE"/>
    <property type="match status" value="1"/>
</dbReference>
<keyword id="KW-0067">ATP-binding</keyword>
<keyword id="KW-0997">Cell inner membrane</keyword>
<keyword id="KW-1003">Cell membrane</keyword>
<keyword id="KW-0406">Ion transport</keyword>
<keyword id="KW-0472">Membrane</keyword>
<keyword id="KW-0533">Nickel</keyword>
<keyword id="KW-0921">Nickel transport</keyword>
<keyword id="KW-0547">Nucleotide-binding</keyword>
<keyword id="KW-1278">Translocase</keyword>
<keyword id="KW-0813">Transport</keyword>
<comment type="function">
    <text evidence="1">Part of the ABC transporter complex NikABCDE involved in nickel import. Responsible for energy coupling to the transport system.</text>
</comment>
<comment type="catalytic activity">
    <reaction evidence="1">
        <text>Ni(2+)(out) + ATP + H2O = Ni(2+)(in) + ADP + phosphate + H(+)</text>
        <dbReference type="Rhea" id="RHEA:15557"/>
        <dbReference type="ChEBI" id="CHEBI:15377"/>
        <dbReference type="ChEBI" id="CHEBI:15378"/>
        <dbReference type="ChEBI" id="CHEBI:30616"/>
        <dbReference type="ChEBI" id="CHEBI:43474"/>
        <dbReference type="ChEBI" id="CHEBI:49786"/>
        <dbReference type="ChEBI" id="CHEBI:456216"/>
        <dbReference type="EC" id="7.2.2.11"/>
    </reaction>
</comment>
<comment type="subunit">
    <text evidence="1">The complex is composed of two ATP-binding proteins (NikD and NikE), two transmembrane proteins (NikB and NikC) and a solute-binding protein (NikA).</text>
</comment>
<comment type="subcellular location">
    <subcellularLocation>
        <location evidence="1">Cell inner membrane</location>
        <topology evidence="1">Peripheral membrane protein</topology>
    </subcellularLocation>
</comment>
<comment type="induction">
    <text evidence="2">Induced by low oxygen tension and metal ion deficiency. Repressed by NiCl(2) excess.</text>
</comment>
<comment type="similarity">
    <text evidence="1">Belongs to the ABC transporter superfamily. Nickel importer (TC 3.A.1.5.3) family.</text>
</comment>
<proteinExistence type="evidence at transcript level"/>
<organism>
    <name type="scientific">Brucella suis biovar 1 (strain 1330)</name>
    <dbReference type="NCBI Taxonomy" id="204722"/>
    <lineage>
        <taxon>Bacteria</taxon>
        <taxon>Pseudomonadati</taxon>
        <taxon>Pseudomonadota</taxon>
        <taxon>Alphaproteobacteria</taxon>
        <taxon>Hyphomicrobiales</taxon>
        <taxon>Brucellaceae</taxon>
        <taxon>Brucella/Ochrobactrum group</taxon>
        <taxon>Brucella</taxon>
    </lineage>
</organism>